<comment type="function">
    <text evidence="1">Involved in the heme biosynthesis. Catalyzes the aerobic oxidative decarboxylation of propionate groups of rings A and B of coproporphyrinogen-III to yield the vinyl groups in protoporphyrinogen-IX.</text>
</comment>
<comment type="catalytic activity">
    <reaction evidence="1">
        <text>coproporphyrinogen III + O2 + 2 H(+) = protoporphyrinogen IX + 2 CO2 + 2 H2O</text>
        <dbReference type="Rhea" id="RHEA:18257"/>
        <dbReference type="ChEBI" id="CHEBI:15377"/>
        <dbReference type="ChEBI" id="CHEBI:15378"/>
        <dbReference type="ChEBI" id="CHEBI:15379"/>
        <dbReference type="ChEBI" id="CHEBI:16526"/>
        <dbReference type="ChEBI" id="CHEBI:57307"/>
        <dbReference type="ChEBI" id="CHEBI:57309"/>
        <dbReference type="EC" id="1.3.3.3"/>
    </reaction>
</comment>
<comment type="cofactor">
    <cofactor evidence="1">
        <name>a divalent metal cation</name>
        <dbReference type="ChEBI" id="CHEBI:60240"/>
    </cofactor>
</comment>
<comment type="pathway">
    <text evidence="1">Porphyrin-containing compound metabolism; protoporphyrin-IX biosynthesis; protoporphyrinogen-IX from coproporphyrinogen-III (O2 route): step 1/1.</text>
</comment>
<comment type="subunit">
    <text evidence="1">Homodimer.</text>
</comment>
<comment type="subcellular location">
    <subcellularLocation>
        <location evidence="1">Cytoplasm</location>
    </subcellularLocation>
</comment>
<comment type="similarity">
    <text evidence="1">Belongs to the aerobic coproporphyrinogen-III oxidase family.</text>
</comment>
<reference key="1">
    <citation type="journal article" date="2008" name="Proc. Natl. Acad. Sci. U.S.A.">
        <title>Nitrogen fixation island and rhizosphere competence traits in the genome of root-associated Pseudomonas stutzeri A1501.</title>
        <authorList>
            <person name="Yan Y."/>
            <person name="Yang J."/>
            <person name="Dou Y."/>
            <person name="Chen M."/>
            <person name="Ping S."/>
            <person name="Peng J."/>
            <person name="Lu W."/>
            <person name="Zhang W."/>
            <person name="Yao Z."/>
            <person name="Li H."/>
            <person name="Liu W."/>
            <person name="He S."/>
            <person name="Geng L."/>
            <person name="Zhang X."/>
            <person name="Yang F."/>
            <person name="Yu H."/>
            <person name="Zhan Y."/>
            <person name="Li D."/>
            <person name="Lin Z."/>
            <person name="Wang Y."/>
            <person name="Elmerich C."/>
            <person name="Lin M."/>
            <person name="Jin Q."/>
        </authorList>
    </citation>
    <scope>NUCLEOTIDE SEQUENCE [LARGE SCALE GENOMIC DNA]</scope>
    <source>
        <strain>A1501</strain>
    </source>
</reference>
<keyword id="KW-0963">Cytoplasm</keyword>
<keyword id="KW-0350">Heme biosynthesis</keyword>
<keyword id="KW-0479">Metal-binding</keyword>
<keyword id="KW-0560">Oxidoreductase</keyword>
<keyword id="KW-0627">Porphyrin biosynthesis</keyword>
<keyword id="KW-1185">Reference proteome</keyword>
<proteinExistence type="inferred from homology"/>
<organism>
    <name type="scientific">Stutzerimonas stutzeri (strain A1501)</name>
    <name type="common">Pseudomonas stutzeri</name>
    <dbReference type="NCBI Taxonomy" id="379731"/>
    <lineage>
        <taxon>Bacteria</taxon>
        <taxon>Pseudomonadati</taxon>
        <taxon>Pseudomonadota</taxon>
        <taxon>Gammaproteobacteria</taxon>
        <taxon>Pseudomonadales</taxon>
        <taxon>Pseudomonadaceae</taxon>
        <taxon>Stutzerimonas</taxon>
    </lineage>
</organism>
<protein>
    <recommendedName>
        <fullName evidence="1">Oxygen-dependent coproporphyrinogen-III oxidase</fullName>
        <shortName evidence="1">CPO</shortName>
        <shortName evidence="1">Coprogen oxidase</shortName>
        <shortName evidence="1">Coproporphyrinogenase</shortName>
        <ecNumber evidence="1">1.3.3.3</ecNumber>
    </recommendedName>
</protein>
<accession>A4VFI3</accession>
<evidence type="ECO:0000255" key="1">
    <source>
        <dbReference type="HAMAP-Rule" id="MF_00333"/>
    </source>
</evidence>
<sequence>MNDRTEAVKAYLLDLQDRICAALEVEDGGARFVEDAWTRPGGGGGRTRVIENGALIEKGGVNFSHVHGDSLPPSASAHRPELAGRSFEALGVSLVIHPHNPYVPTSHANVRFFIAEKDGEEPVWWFGGGFDLTPYYGAEEDCVHWHRVARDACAPFGAEVYPRYKEWCDRYFHIKHRNEPRGVGGLFFDDLNQWDFDTSFAFMRAVGDAYLQAYLPIVQRRKATPFGERERQFQLLRRGRYVEYNLVYDRGTLFGLQSGGRTESILMSLPPQVAWGYDKRPEPGSPEARLTEYFLQDRDWLAAAPA</sequence>
<name>HEM6_STUS1</name>
<dbReference type="EC" id="1.3.3.3" evidence="1"/>
<dbReference type="EMBL" id="CP000304">
    <property type="protein sequence ID" value="ABP77734.1"/>
    <property type="molecule type" value="Genomic_DNA"/>
</dbReference>
<dbReference type="RefSeq" id="WP_011911277.1">
    <property type="nucleotide sequence ID" value="NC_009434.1"/>
</dbReference>
<dbReference type="SMR" id="A4VFI3"/>
<dbReference type="GeneID" id="66819254"/>
<dbReference type="KEGG" id="psa:PST_0026"/>
<dbReference type="eggNOG" id="COG0408">
    <property type="taxonomic scope" value="Bacteria"/>
</dbReference>
<dbReference type="HOGENOM" id="CLU_026169_0_1_6"/>
<dbReference type="UniPathway" id="UPA00251">
    <property type="reaction ID" value="UER00322"/>
</dbReference>
<dbReference type="Proteomes" id="UP000000233">
    <property type="component" value="Chromosome"/>
</dbReference>
<dbReference type="GO" id="GO:0005737">
    <property type="term" value="C:cytoplasm"/>
    <property type="evidence" value="ECO:0007669"/>
    <property type="project" value="UniProtKB-SubCell"/>
</dbReference>
<dbReference type="GO" id="GO:0004109">
    <property type="term" value="F:coproporphyrinogen oxidase activity"/>
    <property type="evidence" value="ECO:0007669"/>
    <property type="project" value="UniProtKB-UniRule"/>
</dbReference>
<dbReference type="GO" id="GO:0046872">
    <property type="term" value="F:metal ion binding"/>
    <property type="evidence" value="ECO:0007669"/>
    <property type="project" value="UniProtKB-KW"/>
</dbReference>
<dbReference type="GO" id="GO:0042803">
    <property type="term" value="F:protein homodimerization activity"/>
    <property type="evidence" value="ECO:0000250"/>
    <property type="project" value="UniProtKB"/>
</dbReference>
<dbReference type="GO" id="GO:0006782">
    <property type="term" value="P:protoporphyrinogen IX biosynthetic process"/>
    <property type="evidence" value="ECO:0007669"/>
    <property type="project" value="UniProtKB-UniRule"/>
</dbReference>
<dbReference type="FunFam" id="3.40.1500.10:FF:000001">
    <property type="entry name" value="Oxygen-dependent coproporphyrinogen-III oxidase"/>
    <property type="match status" value="1"/>
</dbReference>
<dbReference type="Gene3D" id="3.40.1500.10">
    <property type="entry name" value="Coproporphyrinogen III oxidase, aerobic"/>
    <property type="match status" value="1"/>
</dbReference>
<dbReference type="HAMAP" id="MF_00333">
    <property type="entry name" value="Coprogen_oxidas"/>
    <property type="match status" value="1"/>
</dbReference>
<dbReference type="InterPro" id="IPR001260">
    <property type="entry name" value="Coprogen_oxidase_aer"/>
</dbReference>
<dbReference type="InterPro" id="IPR036406">
    <property type="entry name" value="Coprogen_oxidase_aer_sf"/>
</dbReference>
<dbReference type="InterPro" id="IPR018375">
    <property type="entry name" value="Coprogen_oxidase_CS"/>
</dbReference>
<dbReference type="NCBIfam" id="NF003727">
    <property type="entry name" value="PRK05330.1"/>
    <property type="match status" value="1"/>
</dbReference>
<dbReference type="PANTHER" id="PTHR10755">
    <property type="entry name" value="COPROPORPHYRINOGEN III OXIDASE, MITOCHONDRIAL"/>
    <property type="match status" value="1"/>
</dbReference>
<dbReference type="PANTHER" id="PTHR10755:SF0">
    <property type="entry name" value="OXYGEN-DEPENDENT COPROPORPHYRINOGEN-III OXIDASE, MITOCHONDRIAL"/>
    <property type="match status" value="1"/>
</dbReference>
<dbReference type="Pfam" id="PF01218">
    <property type="entry name" value="Coprogen_oxidas"/>
    <property type="match status" value="1"/>
</dbReference>
<dbReference type="PIRSF" id="PIRSF000166">
    <property type="entry name" value="Coproporphyri_ox"/>
    <property type="match status" value="1"/>
</dbReference>
<dbReference type="PRINTS" id="PR00073">
    <property type="entry name" value="COPRGNOXDASE"/>
</dbReference>
<dbReference type="SUPFAM" id="SSF102886">
    <property type="entry name" value="Coproporphyrinogen III oxidase"/>
    <property type="match status" value="1"/>
</dbReference>
<dbReference type="PROSITE" id="PS01021">
    <property type="entry name" value="COPROGEN_OXIDASE"/>
    <property type="match status" value="1"/>
</dbReference>
<gene>
    <name evidence="1" type="primary">hemF</name>
    <name type="ordered locus">PST_0026</name>
</gene>
<feature type="chain" id="PRO_1000019491" description="Oxygen-dependent coproporphyrinogen-III oxidase">
    <location>
        <begin position="1"/>
        <end position="306"/>
    </location>
</feature>
<feature type="region of interest" description="Important for dimerization" evidence="1">
    <location>
        <begin position="241"/>
        <end position="276"/>
    </location>
</feature>
<feature type="active site" description="Proton donor" evidence="1">
    <location>
        <position position="107"/>
    </location>
</feature>
<feature type="binding site" evidence="1">
    <location>
        <position position="93"/>
    </location>
    <ligand>
        <name>substrate</name>
    </ligand>
</feature>
<feature type="binding site" evidence="1">
    <location>
        <position position="97"/>
    </location>
    <ligand>
        <name>a divalent metal cation</name>
        <dbReference type="ChEBI" id="CHEBI:60240"/>
    </ligand>
</feature>
<feature type="binding site" evidence="1">
    <location>
        <position position="107"/>
    </location>
    <ligand>
        <name>a divalent metal cation</name>
        <dbReference type="ChEBI" id="CHEBI:60240"/>
    </ligand>
</feature>
<feature type="binding site" evidence="1">
    <location>
        <begin position="109"/>
        <end position="111"/>
    </location>
    <ligand>
        <name>substrate</name>
    </ligand>
</feature>
<feature type="binding site" evidence="1">
    <location>
        <position position="146"/>
    </location>
    <ligand>
        <name>a divalent metal cation</name>
        <dbReference type="ChEBI" id="CHEBI:60240"/>
    </ligand>
</feature>
<feature type="binding site" evidence="1">
    <location>
        <position position="176"/>
    </location>
    <ligand>
        <name>a divalent metal cation</name>
        <dbReference type="ChEBI" id="CHEBI:60240"/>
    </ligand>
</feature>
<feature type="binding site" evidence="1">
    <location>
        <begin position="259"/>
        <end position="261"/>
    </location>
    <ligand>
        <name>substrate</name>
    </ligand>
</feature>
<feature type="site" description="Important for dimerization" evidence="1">
    <location>
        <position position="176"/>
    </location>
</feature>